<feature type="chain" id="PRO_0000350146" description="Probable dual-specificity RNA methyltransferase RlmN">
    <location>
        <begin position="1"/>
        <end position="344"/>
    </location>
</feature>
<feature type="domain" description="Radical SAM core" evidence="2">
    <location>
        <begin position="89"/>
        <end position="323"/>
    </location>
</feature>
<feature type="active site" description="Proton acceptor" evidence="1">
    <location>
        <position position="83"/>
    </location>
</feature>
<feature type="active site" description="S-methylcysteine intermediate" evidence="1">
    <location>
        <position position="328"/>
    </location>
</feature>
<feature type="binding site" evidence="1">
    <location>
        <position position="103"/>
    </location>
    <ligand>
        <name>[4Fe-4S] cluster</name>
        <dbReference type="ChEBI" id="CHEBI:49883"/>
        <note>4Fe-4S-S-AdoMet</note>
    </ligand>
</feature>
<feature type="binding site" evidence="1">
    <location>
        <position position="107"/>
    </location>
    <ligand>
        <name>[4Fe-4S] cluster</name>
        <dbReference type="ChEBI" id="CHEBI:49883"/>
        <note>4Fe-4S-S-AdoMet</note>
    </ligand>
</feature>
<feature type="binding site" evidence="1">
    <location>
        <position position="110"/>
    </location>
    <ligand>
        <name>[4Fe-4S] cluster</name>
        <dbReference type="ChEBI" id="CHEBI:49883"/>
        <note>4Fe-4S-S-AdoMet</note>
    </ligand>
</feature>
<feature type="binding site" evidence="1">
    <location>
        <begin position="153"/>
        <end position="154"/>
    </location>
    <ligand>
        <name>S-adenosyl-L-methionine</name>
        <dbReference type="ChEBI" id="CHEBI:59789"/>
    </ligand>
</feature>
<feature type="binding site" evidence="1">
    <location>
        <position position="185"/>
    </location>
    <ligand>
        <name>S-adenosyl-L-methionine</name>
        <dbReference type="ChEBI" id="CHEBI:59789"/>
    </ligand>
</feature>
<feature type="binding site" evidence="1">
    <location>
        <begin position="209"/>
        <end position="211"/>
    </location>
    <ligand>
        <name>S-adenosyl-L-methionine</name>
        <dbReference type="ChEBI" id="CHEBI:59789"/>
    </ligand>
</feature>
<feature type="binding site" evidence="1">
    <location>
        <position position="285"/>
    </location>
    <ligand>
        <name>S-adenosyl-L-methionine</name>
        <dbReference type="ChEBI" id="CHEBI:59789"/>
    </ligand>
</feature>
<feature type="disulfide bond" description="(transient)" evidence="1">
    <location>
        <begin position="96"/>
        <end position="328"/>
    </location>
</feature>
<evidence type="ECO:0000255" key="1">
    <source>
        <dbReference type="HAMAP-Rule" id="MF_01849"/>
    </source>
</evidence>
<evidence type="ECO:0000255" key="2">
    <source>
        <dbReference type="PROSITE-ProRule" id="PRU01266"/>
    </source>
</evidence>
<name>RLMN_DEIGD</name>
<gene>
    <name evidence="1" type="primary">rlmN</name>
    <name type="ordered locus">Dgeo_0633</name>
</gene>
<dbReference type="EC" id="2.1.1.192" evidence="1"/>
<dbReference type="EMBL" id="CP000359">
    <property type="protein sequence ID" value="ABF44935.1"/>
    <property type="molecule type" value="Genomic_DNA"/>
</dbReference>
<dbReference type="RefSeq" id="WP_011529776.1">
    <property type="nucleotide sequence ID" value="NC_008025.1"/>
</dbReference>
<dbReference type="SMR" id="Q1J0P9"/>
<dbReference type="STRING" id="319795.Dgeo_0633"/>
<dbReference type="KEGG" id="dge:Dgeo_0633"/>
<dbReference type="eggNOG" id="COG0820">
    <property type="taxonomic scope" value="Bacteria"/>
</dbReference>
<dbReference type="HOGENOM" id="CLU_029101_0_2_0"/>
<dbReference type="Proteomes" id="UP000002431">
    <property type="component" value="Chromosome"/>
</dbReference>
<dbReference type="GO" id="GO:0005737">
    <property type="term" value="C:cytoplasm"/>
    <property type="evidence" value="ECO:0007669"/>
    <property type="project" value="UniProtKB-SubCell"/>
</dbReference>
<dbReference type="GO" id="GO:0051539">
    <property type="term" value="F:4 iron, 4 sulfur cluster binding"/>
    <property type="evidence" value="ECO:0007669"/>
    <property type="project" value="UniProtKB-UniRule"/>
</dbReference>
<dbReference type="GO" id="GO:0046872">
    <property type="term" value="F:metal ion binding"/>
    <property type="evidence" value="ECO:0007669"/>
    <property type="project" value="UniProtKB-KW"/>
</dbReference>
<dbReference type="GO" id="GO:0070040">
    <property type="term" value="F:rRNA (adenine(2503)-C2-)-methyltransferase activity"/>
    <property type="evidence" value="ECO:0007669"/>
    <property type="project" value="UniProtKB-UniRule"/>
</dbReference>
<dbReference type="GO" id="GO:0019843">
    <property type="term" value="F:rRNA binding"/>
    <property type="evidence" value="ECO:0007669"/>
    <property type="project" value="UniProtKB-UniRule"/>
</dbReference>
<dbReference type="GO" id="GO:0002935">
    <property type="term" value="F:tRNA (adenine(37)-C2)-methyltransferase activity"/>
    <property type="evidence" value="ECO:0007669"/>
    <property type="project" value="UniProtKB-UniRule"/>
</dbReference>
<dbReference type="GO" id="GO:0000049">
    <property type="term" value="F:tRNA binding"/>
    <property type="evidence" value="ECO:0007669"/>
    <property type="project" value="UniProtKB-UniRule"/>
</dbReference>
<dbReference type="GO" id="GO:0070475">
    <property type="term" value="P:rRNA base methylation"/>
    <property type="evidence" value="ECO:0007669"/>
    <property type="project" value="UniProtKB-UniRule"/>
</dbReference>
<dbReference type="GO" id="GO:0030488">
    <property type="term" value="P:tRNA methylation"/>
    <property type="evidence" value="ECO:0007669"/>
    <property type="project" value="UniProtKB-UniRule"/>
</dbReference>
<dbReference type="CDD" id="cd01335">
    <property type="entry name" value="Radical_SAM"/>
    <property type="match status" value="1"/>
</dbReference>
<dbReference type="FunFam" id="3.20.20.70:FF:000014">
    <property type="entry name" value="Probable dual-specificity RNA methyltransferase RlmN"/>
    <property type="match status" value="1"/>
</dbReference>
<dbReference type="Gene3D" id="1.10.150.530">
    <property type="match status" value="1"/>
</dbReference>
<dbReference type="Gene3D" id="3.20.20.70">
    <property type="entry name" value="Aldolase class I"/>
    <property type="match status" value="1"/>
</dbReference>
<dbReference type="HAMAP" id="MF_01849">
    <property type="entry name" value="RNA_methyltr_RlmN"/>
    <property type="match status" value="1"/>
</dbReference>
<dbReference type="InterPro" id="IPR013785">
    <property type="entry name" value="Aldolase_TIM"/>
</dbReference>
<dbReference type="InterPro" id="IPR040072">
    <property type="entry name" value="Methyltransferase_A"/>
</dbReference>
<dbReference type="InterPro" id="IPR048641">
    <property type="entry name" value="RlmN_N"/>
</dbReference>
<dbReference type="InterPro" id="IPR027492">
    <property type="entry name" value="RNA_MTrfase_RlmN"/>
</dbReference>
<dbReference type="InterPro" id="IPR004383">
    <property type="entry name" value="rRNA_lsu_MTrfase_RlmN/Cfr"/>
</dbReference>
<dbReference type="InterPro" id="IPR007197">
    <property type="entry name" value="rSAM"/>
</dbReference>
<dbReference type="NCBIfam" id="TIGR00048">
    <property type="entry name" value="rRNA_mod_RlmN"/>
    <property type="match status" value="1"/>
</dbReference>
<dbReference type="PANTHER" id="PTHR30544">
    <property type="entry name" value="23S RRNA METHYLTRANSFERASE"/>
    <property type="match status" value="1"/>
</dbReference>
<dbReference type="PANTHER" id="PTHR30544:SF5">
    <property type="entry name" value="RADICAL SAM CORE DOMAIN-CONTAINING PROTEIN"/>
    <property type="match status" value="1"/>
</dbReference>
<dbReference type="Pfam" id="PF04055">
    <property type="entry name" value="Radical_SAM"/>
    <property type="match status" value="1"/>
</dbReference>
<dbReference type="Pfam" id="PF21016">
    <property type="entry name" value="RlmN_N"/>
    <property type="match status" value="1"/>
</dbReference>
<dbReference type="PIRSF" id="PIRSF006004">
    <property type="entry name" value="CHP00048"/>
    <property type="match status" value="1"/>
</dbReference>
<dbReference type="SFLD" id="SFLDF00275">
    <property type="entry name" value="adenosine_C2_methyltransferase"/>
    <property type="match status" value="1"/>
</dbReference>
<dbReference type="SFLD" id="SFLDS00029">
    <property type="entry name" value="Radical_SAM"/>
    <property type="match status" value="1"/>
</dbReference>
<dbReference type="SUPFAM" id="SSF102114">
    <property type="entry name" value="Radical SAM enzymes"/>
    <property type="match status" value="1"/>
</dbReference>
<dbReference type="PROSITE" id="PS51918">
    <property type="entry name" value="RADICAL_SAM"/>
    <property type="match status" value="1"/>
</dbReference>
<comment type="function">
    <text evidence="1">Specifically methylates position 2 of adenine 2503 in 23S rRNA and position 2 of adenine 37 in tRNAs.</text>
</comment>
<comment type="catalytic activity">
    <reaction evidence="1">
        <text>adenosine(2503) in 23S rRNA + 2 reduced [2Fe-2S]-[ferredoxin] + 2 S-adenosyl-L-methionine = 2-methyladenosine(2503) in 23S rRNA + 5'-deoxyadenosine + L-methionine + 2 oxidized [2Fe-2S]-[ferredoxin] + S-adenosyl-L-homocysteine</text>
        <dbReference type="Rhea" id="RHEA:42916"/>
        <dbReference type="Rhea" id="RHEA-COMP:10000"/>
        <dbReference type="Rhea" id="RHEA-COMP:10001"/>
        <dbReference type="Rhea" id="RHEA-COMP:10152"/>
        <dbReference type="Rhea" id="RHEA-COMP:10282"/>
        <dbReference type="ChEBI" id="CHEBI:17319"/>
        <dbReference type="ChEBI" id="CHEBI:33737"/>
        <dbReference type="ChEBI" id="CHEBI:33738"/>
        <dbReference type="ChEBI" id="CHEBI:57844"/>
        <dbReference type="ChEBI" id="CHEBI:57856"/>
        <dbReference type="ChEBI" id="CHEBI:59789"/>
        <dbReference type="ChEBI" id="CHEBI:74411"/>
        <dbReference type="ChEBI" id="CHEBI:74497"/>
        <dbReference type="EC" id="2.1.1.192"/>
    </reaction>
</comment>
<comment type="catalytic activity">
    <reaction evidence="1">
        <text>adenosine(37) in tRNA + 2 reduced [2Fe-2S]-[ferredoxin] + 2 S-adenosyl-L-methionine = 2-methyladenosine(37) in tRNA + 5'-deoxyadenosine + L-methionine + 2 oxidized [2Fe-2S]-[ferredoxin] + S-adenosyl-L-homocysteine</text>
        <dbReference type="Rhea" id="RHEA:43332"/>
        <dbReference type="Rhea" id="RHEA-COMP:10000"/>
        <dbReference type="Rhea" id="RHEA-COMP:10001"/>
        <dbReference type="Rhea" id="RHEA-COMP:10162"/>
        <dbReference type="Rhea" id="RHEA-COMP:10485"/>
        <dbReference type="ChEBI" id="CHEBI:17319"/>
        <dbReference type="ChEBI" id="CHEBI:33737"/>
        <dbReference type="ChEBI" id="CHEBI:33738"/>
        <dbReference type="ChEBI" id="CHEBI:57844"/>
        <dbReference type="ChEBI" id="CHEBI:57856"/>
        <dbReference type="ChEBI" id="CHEBI:59789"/>
        <dbReference type="ChEBI" id="CHEBI:74411"/>
        <dbReference type="ChEBI" id="CHEBI:74497"/>
        <dbReference type="EC" id="2.1.1.192"/>
    </reaction>
</comment>
<comment type="cofactor">
    <cofactor evidence="1">
        <name>[4Fe-4S] cluster</name>
        <dbReference type="ChEBI" id="CHEBI:49883"/>
    </cofactor>
    <text evidence="1">Binds 1 [4Fe-4S] cluster. The cluster is coordinated with 3 cysteines and an exchangeable S-adenosyl-L-methionine.</text>
</comment>
<comment type="subcellular location">
    <subcellularLocation>
        <location evidence="1">Cytoplasm</location>
    </subcellularLocation>
</comment>
<comment type="miscellaneous">
    <text evidence="1">Reaction proceeds by a ping-pong mechanism involving intermediate methylation of a conserved cysteine residue.</text>
</comment>
<comment type="similarity">
    <text evidence="1">Belongs to the radical SAM superfamily. RlmN family.</text>
</comment>
<protein>
    <recommendedName>
        <fullName evidence="1">Probable dual-specificity RNA methyltransferase RlmN</fullName>
        <ecNumber evidence="1">2.1.1.192</ecNumber>
    </recommendedName>
    <alternativeName>
        <fullName evidence="1">23S rRNA (adenine(2503)-C(2))-methyltransferase</fullName>
    </alternativeName>
    <alternativeName>
        <fullName evidence="1">23S rRNA m2A2503 methyltransferase</fullName>
    </alternativeName>
    <alternativeName>
        <fullName evidence="1">Ribosomal RNA large subunit methyltransferase N</fullName>
    </alternativeName>
    <alternativeName>
        <fullName evidence="1">tRNA (adenine(37)-C(2))-methyltransferase</fullName>
    </alternativeName>
    <alternativeName>
        <fullName evidence="1">tRNA m2A37 methyltransferase</fullName>
    </alternativeName>
</protein>
<proteinExistence type="inferred from homology"/>
<keyword id="KW-0004">4Fe-4S</keyword>
<keyword id="KW-0963">Cytoplasm</keyword>
<keyword id="KW-1015">Disulfide bond</keyword>
<keyword id="KW-0408">Iron</keyword>
<keyword id="KW-0411">Iron-sulfur</keyword>
<keyword id="KW-0479">Metal-binding</keyword>
<keyword id="KW-0489">Methyltransferase</keyword>
<keyword id="KW-0698">rRNA processing</keyword>
<keyword id="KW-0949">S-adenosyl-L-methionine</keyword>
<keyword id="KW-0808">Transferase</keyword>
<keyword id="KW-0819">tRNA processing</keyword>
<sequence>MQLLLDLHPDQYPLEGFRQRQLLEWVFVQGVGTFEAMTNLPAQARADLASRFRLNPFREIETVRSADGSVKYLFTLQDGRQMEAVYMPYLDRKTICVSTMVGCPAKCAFCATGAMGFGRNLTPGEIVGQVLAVAGGEGLAPRELRNLVFMGMGEPLLNYENTMQAARILLHPQALGMSKRRVTLSTVGLPKGIRRLAAEDDLGIKLAISLHAPDEATRQRIIPTGHRNSIAEIMAAAREYQAVTGRRVTFEYSMLRGINDHLWQAEELADLLRGLVSHVNLIPMNPWDGSGFESSTEEQIQAFYDVLAARGVDVSVRRSRGKDAGAACGQLALKRPAAAVGASA</sequence>
<accession>Q1J0P9</accession>
<organism>
    <name type="scientific">Deinococcus geothermalis (strain DSM 11300 / CIP 105573 / AG-3a)</name>
    <dbReference type="NCBI Taxonomy" id="319795"/>
    <lineage>
        <taxon>Bacteria</taxon>
        <taxon>Thermotogati</taxon>
        <taxon>Deinococcota</taxon>
        <taxon>Deinococci</taxon>
        <taxon>Deinococcales</taxon>
        <taxon>Deinococcaceae</taxon>
        <taxon>Deinococcus</taxon>
    </lineage>
</organism>
<reference key="1">
    <citation type="submission" date="2006-04" db="EMBL/GenBank/DDBJ databases">
        <title>Complete sequence of chromosome of Deinococcus geothermalis DSM 11300.</title>
        <authorList>
            <person name="Copeland A."/>
            <person name="Lucas S."/>
            <person name="Lapidus A."/>
            <person name="Barry K."/>
            <person name="Detter J.C."/>
            <person name="Glavina del Rio T."/>
            <person name="Hammon N."/>
            <person name="Israni S."/>
            <person name="Dalin E."/>
            <person name="Tice H."/>
            <person name="Pitluck S."/>
            <person name="Brettin T."/>
            <person name="Bruce D."/>
            <person name="Han C."/>
            <person name="Tapia R."/>
            <person name="Saunders E."/>
            <person name="Gilna P."/>
            <person name="Schmutz J."/>
            <person name="Larimer F."/>
            <person name="Land M."/>
            <person name="Hauser L."/>
            <person name="Kyrpides N."/>
            <person name="Kim E."/>
            <person name="Daly M.J."/>
            <person name="Fredrickson J.K."/>
            <person name="Makarova K.S."/>
            <person name="Gaidamakova E.K."/>
            <person name="Zhai M."/>
            <person name="Richardson P."/>
        </authorList>
    </citation>
    <scope>NUCLEOTIDE SEQUENCE [LARGE SCALE GENOMIC DNA]</scope>
    <source>
        <strain>DSM 11300 / CIP 105573 / AG-3a</strain>
    </source>
</reference>